<name>MURD_STAS1</name>
<gene>
    <name evidence="1" type="primary">murD</name>
    <name type="ordered locus">SSP1588</name>
</gene>
<comment type="function">
    <text evidence="1">Cell wall formation. Catalyzes the addition of glutamate to the nucleotide precursor UDP-N-acetylmuramoyl-L-alanine (UMA).</text>
</comment>
<comment type="catalytic activity">
    <reaction evidence="1">
        <text>UDP-N-acetyl-alpha-D-muramoyl-L-alanine + D-glutamate + ATP = UDP-N-acetyl-alpha-D-muramoyl-L-alanyl-D-glutamate + ADP + phosphate + H(+)</text>
        <dbReference type="Rhea" id="RHEA:16429"/>
        <dbReference type="ChEBI" id="CHEBI:15378"/>
        <dbReference type="ChEBI" id="CHEBI:29986"/>
        <dbReference type="ChEBI" id="CHEBI:30616"/>
        <dbReference type="ChEBI" id="CHEBI:43474"/>
        <dbReference type="ChEBI" id="CHEBI:83898"/>
        <dbReference type="ChEBI" id="CHEBI:83900"/>
        <dbReference type="ChEBI" id="CHEBI:456216"/>
        <dbReference type="EC" id="6.3.2.9"/>
    </reaction>
</comment>
<comment type="pathway">
    <text evidence="1">Cell wall biogenesis; peptidoglycan biosynthesis.</text>
</comment>
<comment type="subcellular location">
    <subcellularLocation>
        <location evidence="1">Cytoplasm</location>
    </subcellularLocation>
</comment>
<comment type="similarity">
    <text evidence="1">Belongs to the MurCDEF family.</text>
</comment>
<organism>
    <name type="scientific">Staphylococcus saprophyticus subsp. saprophyticus (strain ATCC 15305 / DSM 20229 / NCIMB 8711 / NCTC 7292 / S-41)</name>
    <dbReference type="NCBI Taxonomy" id="342451"/>
    <lineage>
        <taxon>Bacteria</taxon>
        <taxon>Bacillati</taxon>
        <taxon>Bacillota</taxon>
        <taxon>Bacilli</taxon>
        <taxon>Bacillales</taxon>
        <taxon>Staphylococcaceae</taxon>
        <taxon>Staphylococcus</taxon>
    </lineage>
</organism>
<sequence>MLKYRGLENKNVLVIGLAKSGYEAAKLLNKLGANVIVNDGKDLSQDAHAIDLENEGIKVIGGEHPLSLLDSHPIIVKNPGIPYTVPLIEAAVEKGLTILTEVELSYLISEAPIIGVTGTNGKTTVTSLIGDMFQKSRVTGKLSGNIGYVASKVAQEVTADDYLVTELSSFQLLGIDQYKPHIAIITNIYSAHLDYHETLDNYQNAKKQIYKNQTENDYLICNYHQRHLIESETLRAKTYYFSTQQEVDGIYVKDDYIVFKGFRIIHKDDLVLPGEHNLENILAAVLAALLSGISVKAIIDSLTSFSGIEHRLQYIGTNKTNKYYNDSKATNTLATQFALDSFKQPIIWLCGGLDRGNDFDELIPHMKNVRMMVAFGETKEKFIKLGESQGKYVITANDVQDAVDKIQSVIEPNDVVLLSPACASWDQYNTFEERGNKFIKSFQANLPSF</sequence>
<keyword id="KW-0067">ATP-binding</keyword>
<keyword id="KW-0131">Cell cycle</keyword>
<keyword id="KW-0132">Cell division</keyword>
<keyword id="KW-0133">Cell shape</keyword>
<keyword id="KW-0961">Cell wall biogenesis/degradation</keyword>
<keyword id="KW-0963">Cytoplasm</keyword>
<keyword id="KW-0436">Ligase</keyword>
<keyword id="KW-0547">Nucleotide-binding</keyword>
<keyword id="KW-0573">Peptidoglycan synthesis</keyword>
<keyword id="KW-1185">Reference proteome</keyword>
<feature type="chain" id="PRO_0000257245" description="UDP-N-acetylmuramoylalanine--D-glutamate ligase">
    <location>
        <begin position="1"/>
        <end position="449"/>
    </location>
</feature>
<feature type="binding site" evidence="1">
    <location>
        <begin position="118"/>
        <end position="124"/>
    </location>
    <ligand>
        <name>ATP</name>
        <dbReference type="ChEBI" id="CHEBI:30616"/>
    </ligand>
</feature>
<dbReference type="EC" id="6.3.2.9" evidence="1"/>
<dbReference type="EMBL" id="AP008934">
    <property type="protein sequence ID" value="BAE18733.1"/>
    <property type="molecule type" value="Genomic_DNA"/>
</dbReference>
<dbReference type="RefSeq" id="WP_002483544.1">
    <property type="nucleotide sequence ID" value="NZ_MTGA01000034.1"/>
</dbReference>
<dbReference type="SMR" id="Q49WW5"/>
<dbReference type="GeneID" id="66867801"/>
<dbReference type="KEGG" id="ssp:SSP1588"/>
<dbReference type="eggNOG" id="COG0771">
    <property type="taxonomic scope" value="Bacteria"/>
</dbReference>
<dbReference type="HOGENOM" id="CLU_032540_0_1_9"/>
<dbReference type="OrthoDB" id="9809796at2"/>
<dbReference type="UniPathway" id="UPA00219"/>
<dbReference type="Proteomes" id="UP000006371">
    <property type="component" value="Chromosome"/>
</dbReference>
<dbReference type="GO" id="GO:0005737">
    <property type="term" value="C:cytoplasm"/>
    <property type="evidence" value="ECO:0007669"/>
    <property type="project" value="UniProtKB-SubCell"/>
</dbReference>
<dbReference type="GO" id="GO:0005524">
    <property type="term" value="F:ATP binding"/>
    <property type="evidence" value="ECO:0007669"/>
    <property type="project" value="UniProtKB-UniRule"/>
</dbReference>
<dbReference type="GO" id="GO:0008764">
    <property type="term" value="F:UDP-N-acetylmuramoylalanine-D-glutamate ligase activity"/>
    <property type="evidence" value="ECO:0007669"/>
    <property type="project" value="UniProtKB-UniRule"/>
</dbReference>
<dbReference type="GO" id="GO:0051301">
    <property type="term" value="P:cell division"/>
    <property type="evidence" value="ECO:0007669"/>
    <property type="project" value="UniProtKB-KW"/>
</dbReference>
<dbReference type="GO" id="GO:0071555">
    <property type="term" value="P:cell wall organization"/>
    <property type="evidence" value="ECO:0007669"/>
    <property type="project" value="UniProtKB-KW"/>
</dbReference>
<dbReference type="GO" id="GO:0009252">
    <property type="term" value="P:peptidoglycan biosynthetic process"/>
    <property type="evidence" value="ECO:0007669"/>
    <property type="project" value="UniProtKB-UniRule"/>
</dbReference>
<dbReference type="GO" id="GO:0008360">
    <property type="term" value="P:regulation of cell shape"/>
    <property type="evidence" value="ECO:0007669"/>
    <property type="project" value="UniProtKB-KW"/>
</dbReference>
<dbReference type="Gene3D" id="3.90.190.20">
    <property type="entry name" value="Mur ligase, C-terminal domain"/>
    <property type="match status" value="1"/>
</dbReference>
<dbReference type="Gene3D" id="3.40.1190.10">
    <property type="entry name" value="Mur-like, catalytic domain"/>
    <property type="match status" value="1"/>
</dbReference>
<dbReference type="Gene3D" id="3.40.50.720">
    <property type="entry name" value="NAD(P)-binding Rossmann-like Domain"/>
    <property type="match status" value="1"/>
</dbReference>
<dbReference type="HAMAP" id="MF_00639">
    <property type="entry name" value="MurD"/>
    <property type="match status" value="1"/>
</dbReference>
<dbReference type="InterPro" id="IPR036565">
    <property type="entry name" value="Mur-like_cat_sf"/>
</dbReference>
<dbReference type="InterPro" id="IPR004101">
    <property type="entry name" value="Mur_ligase_C"/>
</dbReference>
<dbReference type="InterPro" id="IPR036615">
    <property type="entry name" value="Mur_ligase_C_dom_sf"/>
</dbReference>
<dbReference type="InterPro" id="IPR013221">
    <property type="entry name" value="Mur_ligase_cen"/>
</dbReference>
<dbReference type="InterPro" id="IPR005762">
    <property type="entry name" value="MurD"/>
</dbReference>
<dbReference type="NCBIfam" id="TIGR01087">
    <property type="entry name" value="murD"/>
    <property type="match status" value="1"/>
</dbReference>
<dbReference type="PANTHER" id="PTHR43692">
    <property type="entry name" value="UDP-N-ACETYLMURAMOYLALANINE--D-GLUTAMATE LIGASE"/>
    <property type="match status" value="1"/>
</dbReference>
<dbReference type="PANTHER" id="PTHR43692:SF1">
    <property type="entry name" value="UDP-N-ACETYLMURAMOYLALANINE--D-GLUTAMATE LIGASE"/>
    <property type="match status" value="1"/>
</dbReference>
<dbReference type="Pfam" id="PF02875">
    <property type="entry name" value="Mur_ligase_C"/>
    <property type="match status" value="1"/>
</dbReference>
<dbReference type="Pfam" id="PF08245">
    <property type="entry name" value="Mur_ligase_M"/>
    <property type="match status" value="1"/>
</dbReference>
<dbReference type="Pfam" id="PF21799">
    <property type="entry name" value="MurD-like_N"/>
    <property type="match status" value="1"/>
</dbReference>
<dbReference type="SUPFAM" id="SSF51984">
    <property type="entry name" value="MurCD N-terminal domain"/>
    <property type="match status" value="1"/>
</dbReference>
<dbReference type="SUPFAM" id="SSF53623">
    <property type="entry name" value="MurD-like peptide ligases, catalytic domain"/>
    <property type="match status" value="1"/>
</dbReference>
<dbReference type="SUPFAM" id="SSF53244">
    <property type="entry name" value="MurD-like peptide ligases, peptide-binding domain"/>
    <property type="match status" value="1"/>
</dbReference>
<accession>Q49WW5</accession>
<protein>
    <recommendedName>
        <fullName evidence="1">UDP-N-acetylmuramoylalanine--D-glutamate ligase</fullName>
        <ecNumber evidence="1">6.3.2.9</ecNumber>
    </recommendedName>
    <alternativeName>
        <fullName evidence="1">D-glutamic acid-adding enzyme</fullName>
    </alternativeName>
    <alternativeName>
        <fullName evidence="1">UDP-N-acetylmuramoyl-L-alanyl-D-glutamate synthetase</fullName>
    </alternativeName>
</protein>
<evidence type="ECO:0000255" key="1">
    <source>
        <dbReference type="HAMAP-Rule" id="MF_00639"/>
    </source>
</evidence>
<reference key="1">
    <citation type="journal article" date="2005" name="Proc. Natl. Acad. Sci. U.S.A.">
        <title>Whole genome sequence of Staphylococcus saprophyticus reveals the pathogenesis of uncomplicated urinary tract infection.</title>
        <authorList>
            <person name="Kuroda M."/>
            <person name="Yamashita A."/>
            <person name="Hirakawa H."/>
            <person name="Kumano M."/>
            <person name="Morikawa K."/>
            <person name="Higashide M."/>
            <person name="Maruyama A."/>
            <person name="Inose Y."/>
            <person name="Matoba K."/>
            <person name="Toh H."/>
            <person name="Kuhara S."/>
            <person name="Hattori M."/>
            <person name="Ohta T."/>
        </authorList>
    </citation>
    <scope>NUCLEOTIDE SEQUENCE [LARGE SCALE GENOMIC DNA]</scope>
    <source>
        <strain>ATCC 15305 / DSM 20229 / NCIMB 8711 / NCTC 7292 / S-41</strain>
    </source>
</reference>
<proteinExistence type="inferred from homology"/>